<reference key="1">
    <citation type="journal article" date="2005" name="PLoS Biol.">
        <title>The Wolbachia genome of Brugia malayi: endosymbiont evolution within a human pathogenic nematode.</title>
        <authorList>
            <person name="Foster J."/>
            <person name="Ganatra M."/>
            <person name="Kamal I."/>
            <person name="Ware J."/>
            <person name="Makarova K."/>
            <person name="Ivanova N."/>
            <person name="Bhattacharyya A."/>
            <person name="Kapatral V."/>
            <person name="Kumar S."/>
            <person name="Posfai J."/>
            <person name="Vincze T."/>
            <person name="Ingram J."/>
            <person name="Moran L."/>
            <person name="Lapidus A."/>
            <person name="Omelchenko M."/>
            <person name="Kyrpides N."/>
            <person name="Ghedin E."/>
            <person name="Wang S."/>
            <person name="Goltsman E."/>
            <person name="Joukov V."/>
            <person name="Ostrovskaya O."/>
            <person name="Tsukerman K."/>
            <person name="Mazur M."/>
            <person name="Comb D."/>
            <person name="Koonin E."/>
            <person name="Slatko B."/>
        </authorList>
    </citation>
    <scope>NUCLEOTIDE SEQUENCE [LARGE SCALE GENOMIC DNA]</scope>
    <source>
        <strain>TRS</strain>
    </source>
</reference>
<accession>Q5GRR7</accession>
<proteinExistence type="inferred from homology"/>
<gene>
    <name evidence="1" type="primary">hemH</name>
    <name type="ordered locus">Wbm0719</name>
</gene>
<organism>
    <name type="scientific">Wolbachia sp. subsp. Brugia malayi (strain TRS)</name>
    <dbReference type="NCBI Taxonomy" id="292805"/>
    <lineage>
        <taxon>Bacteria</taxon>
        <taxon>Pseudomonadati</taxon>
        <taxon>Pseudomonadota</taxon>
        <taxon>Alphaproteobacteria</taxon>
        <taxon>Rickettsiales</taxon>
        <taxon>Anaplasmataceae</taxon>
        <taxon>Wolbachieae</taxon>
        <taxon>Wolbachia</taxon>
    </lineage>
</organism>
<protein>
    <recommendedName>
        <fullName evidence="1">Ferrochelatase</fullName>
        <ecNumber evidence="1">4.98.1.1</ecNumber>
    </recommendedName>
    <alternativeName>
        <fullName evidence="1">Heme synthase</fullName>
    </alternativeName>
    <alternativeName>
        <fullName evidence="1">Protoheme ferro-lyase</fullName>
    </alternativeName>
</protein>
<comment type="function">
    <text evidence="1">Catalyzes the ferrous insertion into protoporphyrin IX.</text>
</comment>
<comment type="catalytic activity">
    <reaction evidence="1">
        <text>heme b + 2 H(+) = protoporphyrin IX + Fe(2+)</text>
        <dbReference type="Rhea" id="RHEA:22584"/>
        <dbReference type="ChEBI" id="CHEBI:15378"/>
        <dbReference type="ChEBI" id="CHEBI:29033"/>
        <dbReference type="ChEBI" id="CHEBI:57306"/>
        <dbReference type="ChEBI" id="CHEBI:60344"/>
        <dbReference type="EC" id="4.98.1.1"/>
    </reaction>
</comment>
<comment type="pathway">
    <text evidence="1">Porphyrin-containing compound metabolism; protoheme biosynthesis; protoheme from protoporphyrin-IX: step 1/1.</text>
</comment>
<comment type="subcellular location">
    <subcellularLocation>
        <location evidence="1">Cytoplasm</location>
    </subcellularLocation>
</comment>
<comment type="similarity">
    <text evidence="1">Belongs to the ferrochelatase family.</text>
</comment>
<feature type="chain" id="PRO_1000019384" description="Ferrochelatase">
    <location>
        <begin position="1"/>
        <end position="340"/>
    </location>
</feature>
<feature type="binding site" evidence="1">
    <location>
        <position position="218"/>
    </location>
    <ligand>
        <name>Fe cation</name>
        <dbReference type="ChEBI" id="CHEBI:24875"/>
    </ligand>
</feature>
<feature type="binding site" evidence="1">
    <location>
        <position position="298"/>
    </location>
    <ligand>
        <name>Fe cation</name>
        <dbReference type="ChEBI" id="CHEBI:24875"/>
    </ligand>
</feature>
<name>HEMH_WOLTR</name>
<dbReference type="EC" id="4.98.1.1" evidence="1"/>
<dbReference type="EMBL" id="AE017321">
    <property type="protein sequence ID" value="AAW71307.1"/>
    <property type="molecule type" value="Genomic_DNA"/>
</dbReference>
<dbReference type="RefSeq" id="WP_011256916.1">
    <property type="nucleotide sequence ID" value="NC_006833.1"/>
</dbReference>
<dbReference type="SMR" id="Q5GRR7"/>
<dbReference type="STRING" id="292805.Wbm0719"/>
<dbReference type="KEGG" id="wbm:Wbm0719"/>
<dbReference type="eggNOG" id="COG0276">
    <property type="taxonomic scope" value="Bacteria"/>
</dbReference>
<dbReference type="HOGENOM" id="CLU_018884_4_1_5"/>
<dbReference type="UniPathway" id="UPA00252">
    <property type="reaction ID" value="UER00325"/>
</dbReference>
<dbReference type="Proteomes" id="UP000000534">
    <property type="component" value="Chromosome"/>
</dbReference>
<dbReference type="GO" id="GO:0005737">
    <property type="term" value="C:cytoplasm"/>
    <property type="evidence" value="ECO:0007669"/>
    <property type="project" value="UniProtKB-SubCell"/>
</dbReference>
<dbReference type="GO" id="GO:0004325">
    <property type="term" value="F:ferrochelatase activity"/>
    <property type="evidence" value="ECO:0007669"/>
    <property type="project" value="UniProtKB-UniRule"/>
</dbReference>
<dbReference type="GO" id="GO:0046872">
    <property type="term" value="F:metal ion binding"/>
    <property type="evidence" value="ECO:0007669"/>
    <property type="project" value="UniProtKB-KW"/>
</dbReference>
<dbReference type="GO" id="GO:0006783">
    <property type="term" value="P:heme biosynthetic process"/>
    <property type="evidence" value="ECO:0007669"/>
    <property type="project" value="UniProtKB-UniRule"/>
</dbReference>
<dbReference type="CDD" id="cd00419">
    <property type="entry name" value="Ferrochelatase_C"/>
    <property type="match status" value="1"/>
</dbReference>
<dbReference type="CDD" id="cd03411">
    <property type="entry name" value="Ferrochelatase_N"/>
    <property type="match status" value="1"/>
</dbReference>
<dbReference type="Gene3D" id="3.40.50.1400">
    <property type="match status" value="2"/>
</dbReference>
<dbReference type="HAMAP" id="MF_00323">
    <property type="entry name" value="Ferrochelatase"/>
    <property type="match status" value="1"/>
</dbReference>
<dbReference type="InterPro" id="IPR001015">
    <property type="entry name" value="Ferrochelatase"/>
</dbReference>
<dbReference type="InterPro" id="IPR019772">
    <property type="entry name" value="Ferrochelatase_AS"/>
</dbReference>
<dbReference type="InterPro" id="IPR033644">
    <property type="entry name" value="Ferrochelatase_C"/>
</dbReference>
<dbReference type="InterPro" id="IPR033659">
    <property type="entry name" value="Ferrochelatase_N"/>
</dbReference>
<dbReference type="NCBIfam" id="TIGR00109">
    <property type="entry name" value="hemH"/>
    <property type="match status" value="1"/>
</dbReference>
<dbReference type="PANTHER" id="PTHR11108">
    <property type="entry name" value="FERROCHELATASE"/>
    <property type="match status" value="1"/>
</dbReference>
<dbReference type="PANTHER" id="PTHR11108:SF1">
    <property type="entry name" value="FERROCHELATASE, MITOCHONDRIAL"/>
    <property type="match status" value="1"/>
</dbReference>
<dbReference type="Pfam" id="PF00762">
    <property type="entry name" value="Ferrochelatase"/>
    <property type="match status" value="2"/>
</dbReference>
<dbReference type="SUPFAM" id="SSF53800">
    <property type="entry name" value="Chelatase"/>
    <property type="match status" value="1"/>
</dbReference>
<dbReference type="PROSITE" id="PS00534">
    <property type="entry name" value="FERROCHELATASE"/>
    <property type="match status" value="1"/>
</dbReference>
<sequence>MKKAVVLLNLGGPDSLSAVRPFLFNLFYDKRIINLPNPFRFFLAKFISAKRENNARKIYEQIGGKSPILENTKMQAEALERELNRSVFCHPSSVTLGPRKENWIPVSRIGMTSKLTKVFICMRYWHPFANEVVKSVKQFDPDEVILLPLYPQYSTTTTLSSIENWQKNAKQYGIKCNTKIIRHHYDNQDFIEAHANLITKHYKLASEVGKPRVLFSAHSLPLSVIKKGDPYALQVEETVKLIVKKLHIKDLDWSICYQSKIGPVKWLEPSTESELLRAKADGVPVVLLPISFVSEHSETLVELDMEYKTIIKDGYYFRIPTLSTNSLFIKCLAGLCINHS</sequence>
<keyword id="KW-0963">Cytoplasm</keyword>
<keyword id="KW-0350">Heme biosynthesis</keyword>
<keyword id="KW-0408">Iron</keyword>
<keyword id="KW-0456">Lyase</keyword>
<keyword id="KW-0479">Metal-binding</keyword>
<keyword id="KW-0627">Porphyrin biosynthesis</keyword>
<keyword id="KW-1185">Reference proteome</keyword>
<evidence type="ECO:0000255" key="1">
    <source>
        <dbReference type="HAMAP-Rule" id="MF_00323"/>
    </source>
</evidence>